<dbReference type="EC" id="3.1.2.6" evidence="1"/>
<dbReference type="EMBL" id="CP000469">
    <property type="protein sequence ID" value="ABK48598.1"/>
    <property type="molecule type" value="Genomic_DNA"/>
</dbReference>
<dbReference type="RefSeq" id="WP_011717300.1">
    <property type="nucleotide sequence ID" value="NC_008577.1"/>
</dbReference>
<dbReference type="SMR" id="A0KXS9"/>
<dbReference type="STRING" id="94122.Shewana3_2369"/>
<dbReference type="KEGG" id="shn:Shewana3_2369"/>
<dbReference type="eggNOG" id="COG0491">
    <property type="taxonomic scope" value="Bacteria"/>
</dbReference>
<dbReference type="HOGENOM" id="CLU_030571_4_1_6"/>
<dbReference type="OrthoDB" id="9802248at2"/>
<dbReference type="UniPathway" id="UPA00619">
    <property type="reaction ID" value="UER00676"/>
</dbReference>
<dbReference type="Proteomes" id="UP000002589">
    <property type="component" value="Chromosome"/>
</dbReference>
<dbReference type="GO" id="GO:0004416">
    <property type="term" value="F:hydroxyacylglutathione hydrolase activity"/>
    <property type="evidence" value="ECO:0007669"/>
    <property type="project" value="UniProtKB-UniRule"/>
</dbReference>
<dbReference type="GO" id="GO:0046872">
    <property type="term" value="F:metal ion binding"/>
    <property type="evidence" value="ECO:0007669"/>
    <property type="project" value="UniProtKB-KW"/>
</dbReference>
<dbReference type="GO" id="GO:0019243">
    <property type="term" value="P:methylglyoxal catabolic process to D-lactate via S-lactoyl-glutathione"/>
    <property type="evidence" value="ECO:0007669"/>
    <property type="project" value="InterPro"/>
</dbReference>
<dbReference type="CDD" id="cd07723">
    <property type="entry name" value="hydroxyacylglutathione_hydrolase_MBL-fold"/>
    <property type="match status" value="1"/>
</dbReference>
<dbReference type="Gene3D" id="3.60.15.10">
    <property type="entry name" value="Ribonuclease Z/Hydroxyacylglutathione hydrolase-like"/>
    <property type="match status" value="1"/>
</dbReference>
<dbReference type="HAMAP" id="MF_01374">
    <property type="entry name" value="Glyoxalase_2"/>
    <property type="match status" value="1"/>
</dbReference>
<dbReference type="InterPro" id="IPR035680">
    <property type="entry name" value="Clx_II_MBL"/>
</dbReference>
<dbReference type="InterPro" id="IPR050110">
    <property type="entry name" value="Glyoxalase_II_hydrolase"/>
</dbReference>
<dbReference type="InterPro" id="IPR032282">
    <property type="entry name" value="HAGH_C"/>
</dbReference>
<dbReference type="InterPro" id="IPR017782">
    <property type="entry name" value="Hydroxyacylglutathione_Hdrlase"/>
</dbReference>
<dbReference type="InterPro" id="IPR001279">
    <property type="entry name" value="Metallo-B-lactamas"/>
</dbReference>
<dbReference type="InterPro" id="IPR036866">
    <property type="entry name" value="RibonucZ/Hydroxyglut_hydro"/>
</dbReference>
<dbReference type="NCBIfam" id="TIGR03413">
    <property type="entry name" value="GSH_gloB"/>
    <property type="match status" value="1"/>
</dbReference>
<dbReference type="PANTHER" id="PTHR43705">
    <property type="entry name" value="HYDROXYACYLGLUTATHIONE HYDROLASE"/>
    <property type="match status" value="1"/>
</dbReference>
<dbReference type="PANTHER" id="PTHR43705:SF1">
    <property type="entry name" value="HYDROXYACYLGLUTATHIONE HYDROLASE GLOB"/>
    <property type="match status" value="1"/>
</dbReference>
<dbReference type="Pfam" id="PF16123">
    <property type="entry name" value="HAGH_C"/>
    <property type="match status" value="1"/>
</dbReference>
<dbReference type="Pfam" id="PF00753">
    <property type="entry name" value="Lactamase_B"/>
    <property type="match status" value="1"/>
</dbReference>
<dbReference type="PIRSF" id="PIRSF005457">
    <property type="entry name" value="Glx"/>
    <property type="match status" value="1"/>
</dbReference>
<dbReference type="SMART" id="SM00849">
    <property type="entry name" value="Lactamase_B"/>
    <property type="match status" value="1"/>
</dbReference>
<dbReference type="SUPFAM" id="SSF56281">
    <property type="entry name" value="Metallo-hydrolase/oxidoreductase"/>
    <property type="match status" value="1"/>
</dbReference>
<accession>A0KXS9</accession>
<gene>
    <name evidence="1" type="primary">gloB</name>
    <name type="ordered locus">Shewana3_2369</name>
</gene>
<organism>
    <name type="scientific">Shewanella sp. (strain ANA-3)</name>
    <dbReference type="NCBI Taxonomy" id="94122"/>
    <lineage>
        <taxon>Bacteria</taxon>
        <taxon>Pseudomonadati</taxon>
        <taxon>Pseudomonadota</taxon>
        <taxon>Gammaproteobacteria</taxon>
        <taxon>Alteromonadales</taxon>
        <taxon>Shewanellaceae</taxon>
        <taxon>Shewanella</taxon>
    </lineage>
</organism>
<sequence>MLTITAINAFNDNYIWVLRQDSQQAVYVVDPGDANVVLDYLHAQRLSLAGILITHHHRDHTGGIAALTDHVKQTTGHDLAVYGPQSEDIQGINQPIEPTLSDSLTLPFIDAPVRILSVPGHTAGHIAYLVDDALFCGDTLFSAGCGRLFEGTPSQMWQSLSLLAALPDETRVYCAHEYTLSNLKFAQTVDTDNEALNAYVEEASTLRAQGKATIPSTIGLERAINPFLRPLSPTIVNSIKNQFCDQDLTKADELTCFTLLRQWKDIF</sequence>
<evidence type="ECO:0000255" key="1">
    <source>
        <dbReference type="HAMAP-Rule" id="MF_01374"/>
    </source>
</evidence>
<keyword id="KW-0378">Hydrolase</keyword>
<keyword id="KW-0479">Metal-binding</keyword>
<keyword id="KW-0862">Zinc</keyword>
<protein>
    <recommendedName>
        <fullName evidence="1">Hydroxyacylglutathione hydrolase</fullName>
        <ecNumber evidence="1">3.1.2.6</ecNumber>
    </recommendedName>
    <alternativeName>
        <fullName evidence="1">Glyoxalase II</fullName>
        <shortName evidence="1">Glx II</shortName>
    </alternativeName>
</protein>
<proteinExistence type="inferred from homology"/>
<feature type="chain" id="PRO_1000144812" description="Hydroxyacylglutathione hydrolase">
    <location>
        <begin position="1"/>
        <end position="267"/>
    </location>
</feature>
<feature type="binding site" evidence="1">
    <location>
        <position position="55"/>
    </location>
    <ligand>
        <name>Zn(2+)</name>
        <dbReference type="ChEBI" id="CHEBI:29105"/>
        <label>1</label>
    </ligand>
</feature>
<feature type="binding site" evidence="1">
    <location>
        <position position="57"/>
    </location>
    <ligand>
        <name>Zn(2+)</name>
        <dbReference type="ChEBI" id="CHEBI:29105"/>
        <label>1</label>
    </ligand>
</feature>
<feature type="binding site" evidence="1">
    <location>
        <position position="59"/>
    </location>
    <ligand>
        <name>Zn(2+)</name>
        <dbReference type="ChEBI" id="CHEBI:29105"/>
        <label>2</label>
    </ligand>
</feature>
<feature type="binding site" evidence="1">
    <location>
        <position position="60"/>
    </location>
    <ligand>
        <name>Zn(2+)</name>
        <dbReference type="ChEBI" id="CHEBI:29105"/>
        <label>2</label>
    </ligand>
</feature>
<feature type="binding site" evidence="1">
    <location>
        <position position="121"/>
    </location>
    <ligand>
        <name>Zn(2+)</name>
        <dbReference type="ChEBI" id="CHEBI:29105"/>
        <label>1</label>
    </ligand>
</feature>
<feature type="binding site" evidence="1">
    <location>
        <position position="138"/>
    </location>
    <ligand>
        <name>Zn(2+)</name>
        <dbReference type="ChEBI" id="CHEBI:29105"/>
        <label>1</label>
    </ligand>
</feature>
<feature type="binding site" evidence="1">
    <location>
        <position position="138"/>
    </location>
    <ligand>
        <name>Zn(2+)</name>
        <dbReference type="ChEBI" id="CHEBI:29105"/>
        <label>2</label>
    </ligand>
</feature>
<feature type="binding site" evidence="1">
    <location>
        <position position="176"/>
    </location>
    <ligand>
        <name>Zn(2+)</name>
        <dbReference type="ChEBI" id="CHEBI:29105"/>
        <label>2</label>
    </ligand>
</feature>
<name>GLO2_SHESA</name>
<reference key="1">
    <citation type="submission" date="2006-09" db="EMBL/GenBank/DDBJ databases">
        <title>Complete sequence of chromosome 1 of Shewanella sp. ANA-3.</title>
        <authorList>
            <person name="Copeland A."/>
            <person name="Lucas S."/>
            <person name="Lapidus A."/>
            <person name="Barry K."/>
            <person name="Detter J.C."/>
            <person name="Glavina del Rio T."/>
            <person name="Hammon N."/>
            <person name="Israni S."/>
            <person name="Dalin E."/>
            <person name="Tice H."/>
            <person name="Pitluck S."/>
            <person name="Chertkov O."/>
            <person name="Brettin T."/>
            <person name="Bruce D."/>
            <person name="Han C."/>
            <person name="Tapia R."/>
            <person name="Gilna P."/>
            <person name="Schmutz J."/>
            <person name="Larimer F."/>
            <person name="Land M."/>
            <person name="Hauser L."/>
            <person name="Kyrpides N."/>
            <person name="Kim E."/>
            <person name="Newman D."/>
            <person name="Salticov C."/>
            <person name="Konstantinidis K."/>
            <person name="Klappenback J."/>
            <person name="Tiedje J."/>
            <person name="Richardson P."/>
        </authorList>
    </citation>
    <scope>NUCLEOTIDE SEQUENCE [LARGE SCALE GENOMIC DNA]</scope>
    <source>
        <strain>ANA-3</strain>
    </source>
</reference>
<comment type="function">
    <text evidence="1">Thiolesterase that catalyzes the hydrolysis of S-D-lactoyl-glutathione to form glutathione and D-lactic acid.</text>
</comment>
<comment type="catalytic activity">
    <reaction evidence="1">
        <text>an S-(2-hydroxyacyl)glutathione + H2O = a 2-hydroxy carboxylate + glutathione + H(+)</text>
        <dbReference type="Rhea" id="RHEA:21864"/>
        <dbReference type="ChEBI" id="CHEBI:15377"/>
        <dbReference type="ChEBI" id="CHEBI:15378"/>
        <dbReference type="ChEBI" id="CHEBI:57925"/>
        <dbReference type="ChEBI" id="CHEBI:58896"/>
        <dbReference type="ChEBI" id="CHEBI:71261"/>
        <dbReference type="EC" id="3.1.2.6"/>
    </reaction>
</comment>
<comment type="cofactor">
    <cofactor evidence="1">
        <name>Zn(2+)</name>
        <dbReference type="ChEBI" id="CHEBI:29105"/>
    </cofactor>
    <text evidence="1">Binds 2 Zn(2+) ions per subunit.</text>
</comment>
<comment type="pathway">
    <text evidence="1">Secondary metabolite metabolism; methylglyoxal degradation; (R)-lactate from methylglyoxal: step 2/2.</text>
</comment>
<comment type="subunit">
    <text evidence="1">Monomer.</text>
</comment>
<comment type="similarity">
    <text evidence="1">Belongs to the metallo-beta-lactamase superfamily. Glyoxalase II family.</text>
</comment>